<dbReference type="EC" id="2.6.1.52" evidence="1"/>
<dbReference type="EMBL" id="CP000800">
    <property type="protein sequence ID" value="ABV18014.1"/>
    <property type="molecule type" value="Genomic_DNA"/>
</dbReference>
<dbReference type="RefSeq" id="WP_000057152.1">
    <property type="nucleotide sequence ID" value="NC_009801.1"/>
</dbReference>
<dbReference type="SMR" id="A7ZJZ6"/>
<dbReference type="KEGG" id="ecw:EcE24377A_1004"/>
<dbReference type="HOGENOM" id="CLU_034866_0_2_6"/>
<dbReference type="UniPathway" id="UPA00135">
    <property type="reaction ID" value="UER00197"/>
</dbReference>
<dbReference type="UniPathway" id="UPA00244">
    <property type="reaction ID" value="UER00311"/>
</dbReference>
<dbReference type="Proteomes" id="UP000001122">
    <property type="component" value="Chromosome"/>
</dbReference>
<dbReference type="GO" id="GO:0005737">
    <property type="term" value="C:cytoplasm"/>
    <property type="evidence" value="ECO:0007669"/>
    <property type="project" value="UniProtKB-SubCell"/>
</dbReference>
<dbReference type="GO" id="GO:0004648">
    <property type="term" value="F:O-phospho-L-serine:2-oxoglutarate aminotransferase activity"/>
    <property type="evidence" value="ECO:0007669"/>
    <property type="project" value="UniProtKB-UniRule"/>
</dbReference>
<dbReference type="GO" id="GO:0030170">
    <property type="term" value="F:pyridoxal phosphate binding"/>
    <property type="evidence" value="ECO:0007669"/>
    <property type="project" value="UniProtKB-UniRule"/>
</dbReference>
<dbReference type="GO" id="GO:0006564">
    <property type="term" value="P:L-serine biosynthetic process"/>
    <property type="evidence" value="ECO:0007669"/>
    <property type="project" value="UniProtKB-UniRule"/>
</dbReference>
<dbReference type="GO" id="GO:0008615">
    <property type="term" value="P:pyridoxine biosynthetic process"/>
    <property type="evidence" value="ECO:0007669"/>
    <property type="project" value="UniProtKB-UniRule"/>
</dbReference>
<dbReference type="CDD" id="cd00611">
    <property type="entry name" value="PSAT_like"/>
    <property type="match status" value="1"/>
</dbReference>
<dbReference type="FunFam" id="3.40.640.10:FF:000010">
    <property type="entry name" value="Phosphoserine aminotransferase"/>
    <property type="match status" value="1"/>
</dbReference>
<dbReference type="FunFam" id="3.90.1150.10:FF:000006">
    <property type="entry name" value="Phosphoserine aminotransferase"/>
    <property type="match status" value="1"/>
</dbReference>
<dbReference type="Gene3D" id="3.90.1150.10">
    <property type="entry name" value="Aspartate Aminotransferase, domain 1"/>
    <property type="match status" value="1"/>
</dbReference>
<dbReference type="Gene3D" id="3.40.640.10">
    <property type="entry name" value="Type I PLP-dependent aspartate aminotransferase-like (Major domain)"/>
    <property type="match status" value="1"/>
</dbReference>
<dbReference type="HAMAP" id="MF_00160">
    <property type="entry name" value="SerC_aminotrans_5"/>
    <property type="match status" value="1"/>
</dbReference>
<dbReference type="InterPro" id="IPR000192">
    <property type="entry name" value="Aminotrans_V_dom"/>
</dbReference>
<dbReference type="InterPro" id="IPR020578">
    <property type="entry name" value="Aminotrans_V_PyrdxlP_BS"/>
</dbReference>
<dbReference type="InterPro" id="IPR022278">
    <property type="entry name" value="Pser_aminoTfrase"/>
</dbReference>
<dbReference type="InterPro" id="IPR015424">
    <property type="entry name" value="PyrdxlP-dep_Trfase"/>
</dbReference>
<dbReference type="InterPro" id="IPR015421">
    <property type="entry name" value="PyrdxlP-dep_Trfase_major"/>
</dbReference>
<dbReference type="InterPro" id="IPR015422">
    <property type="entry name" value="PyrdxlP-dep_Trfase_small"/>
</dbReference>
<dbReference type="NCBIfam" id="NF003764">
    <property type="entry name" value="PRK05355.1"/>
    <property type="match status" value="1"/>
</dbReference>
<dbReference type="NCBIfam" id="TIGR01364">
    <property type="entry name" value="serC_1"/>
    <property type="match status" value="1"/>
</dbReference>
<dbReference type="PANTHER" id="PTHR43247">
    <property type="entry name" value="PHOSPHOSERINE AMINOTRANSFERASE"/>
    <property type="match status" value="1"/>
</dbReference>
<dbReference type="PANTHER" id="PTHR43247:SF1">
    <property type="entry name" value="PHOSPHOSERINE AMINOTRANSFERASE"/>
    <property type="match status" value="1"/>
</dbReference>
<dbReference type="Pfam" id="PF00266">
    <property type="entry name" value="Aminotran_5"/>
    <property type="match status" value="1"/>
</dbReference>
<dbReference type="PIRSF" id="PIRSF000525">
    <property type="entry name" value="SerC"/>
    <property type="match status" value="1"/>
</dbReference>
<dbReference type="SUPFAM" id="SSF53383">
    <property type="entry name" value="PLP-dependent transferases"/>
    <property type="match status" value="1"/>
</dbReference>
<dbReference type="PROSITE" id="PS00595">
    <property type="entry name" value="AA_TRANSFER_CLASS_5"/>
    <property type="match status" value="1"/>
</dbReference>
<protein>
    <recommendedName>
        <fullName evidence="1">Phosphoserine aminotransferase</fullName>
        <ecNumber evidence="1">2.6.1.52</ecNumber>
    </recommendedName>
    <alternativeName>
        <fullName evidence="1">Phosphohydroxythreonine aminotransferase</fullName>
        <shortName evidence="1">PSAT</shortName>
    </alternativeName>
</protein>
<organism>
    <name type="scientific">Escherichia coli O139:H28 (strain E24377A / ETEC)</name>
    <dbReference type="NCBI Taxonomy" id="331111"/>
    <lineage>
        <taxon>Bacteria</taxon>
        <taxon>Pseudomonadati</taxon>
        <taxon>Pseudomonadota</taxon>
        <taxon>Gammaproteobacteria</taxon>
        <taxon>Enterobacterales</taxon>
        <taxon>Enterobacteriaceae</taxon>
        <taxon>Escherichia</taxon>
    </lineage>
</organism>
<accession>A7ZJZ6</accession>
<sequence>MAQIFNFSSGPAMLPAEVLKQAQQELRDWNGLGTSVMEVSHRGKEFIQVAEEAEKDFRDLLNVPSNYKVLFCHGGGRGQFAAVPLNILGDKTTADYVDAGYWAASAIKEAKKYCTPNVFDAKVTVDGLRAVKPMREWQLSDNAAYMHYCPNETIDGIAIDETPDFGKDVVVAADFSSTILSRPIDVSRYGVIYAGAQKNIGPAGLTIVIVREDLLGKANIACPSILDYSILNDNGSMFNTPPTFAWYLSGLVFKWLRANGGVAEMDKINQQKAELLYGVIDNSDFYRNDVAKANRSRMNVPFQLADSALDKLFLEESFAAGLHALKGHRVVGGMRASIYNAMPLEGVKALTDFMVEFERRHG</sequence>
<gene>
    <name evidence="1" type="primary">serC</name>
    <name type="ordered locus">EcE24377A_1004</name>
</gene>
<name>SERC_ECO24</name>
<evidence type="ECO:0000255" key="1">
    <source>
        <dbReference type="HAMAP-Rule" id="MF_00160"/>
    </source>
</evidence>
<feature type="chain" id="PRO_1000203518" description="Phosphoserine aminotransferase">
    <location>
        <begin position="1"/>
        <end position="362"/>
    </location>
</feature>
<feature type="binding site" evidence="1">
    <location>
        <position position="9"/>
    </location>
    <ligand>
        <name>L-glutamate</name>
        <dbReference type="ChEBI" id="CHEBI:29985"/>
    </ligand>
</feature>
<feature type="binding site" evidence="1">
    <location>
        <position position="42"/>
    </location>
    <ligand>
        <name>L-glutamate</name>
        <dbReference type="ChEBI" id="CHEBI:29985"/>
    </ligand>
</feature>
<feature type="binding site" evidence="1">
    <location>
        <begin position="76"/>
        <end position="77"/>
    </location>
    <ligand>
        <name>pyridoxal 5'-phosphate</name>
        <dbReference type="ChEBI" id="CHEBI:597326"/>
    </ligand>
</feature>
<feature type="binding site" evidence="1">
    <location>
        <position position="102"/>
    </location>
    <ligand>
        <name>pyridoxal 5'-phosphate</name>
        <dbReference type="ChEBI" id="CHEBI:597326"/>
    </ligand>
</feature>
<feature type="binding site" evidence="1">
    <location>
        <position position="153"/>
    </location>
    <ligand>
        <name>pyridoxal 5'-phosphate</name>
        <dbReference type="ChEBI" id="CHEBI:597326"/>
    </ligand>
</feature>
<feature type="binding site" evidence="1">
    <location>
        <position position="174"/>
    </location>
    <ligand>
        <name>pyridoxal 5'-phosphate</name>
        <dbReference type="ChEBI" id="CHEBI:597326"/>
    </ligand>
</feature>
<feature type="binding site" evidence="1">
    <location>
        <position position="197"/>
    </location>
    <ligand>
        <name>pyridoxal 5'-phosphate</name>
        <dbReference type="ChEBI" id="CHEBI:597326"/>
    </ligand>
</feature>
<feature type="binding site" evidence="1">
    <location>
        <begin position="239"/>
        <end position="240"/>
    </location>
    <ligand>
        <name>pyridoxal 5'-phosphate</name>
        <dbReference type="ChEBI" id="CHEBI:597326"/>
    </ligand>
</feature>
<feature type="modified residue" description="N6-(pyridoxal phosphate)lysine" evidence="1">
    <location>
        <position position="198"/>
    </location>
</feature>
<keyword id="KW-0028">Amino-acid biosynthesis</keyword>
<keyword id="KW-0032">Aminotransferase</keyword>
<keyword id="KW-0963">Cytoplasm</keyword>
<keyword id="KW-0663">Pyridoxal phosphate</keyword>
<keyword id="KW-0664">Pyridoxine biosynthesis</keyword>
<keyword id="KW-1185">Reference proteome</keyword>
<keyword id="KW-0718">Serine biosynthesis</keyword>
<keyword id="KW-0808">Transferase</keyword>
<proteinExistence type="inferred from homology"/>
<reference key="1">
    <citation type="journal article" date="2008" name="J. Bacteriol.">
        <title>The pangenome structure of Escherichia coli: comparative genomic analysis of E. coli commensal and pathogenic isolates.</title>
        <authorList>
            <person name="Rasko D.A."/>
            <person name="Rosovitz M.J."/>
            <person name="Myers G.S.A."/>
            <person name="Mongodin E.F."/>
            <person name="Fricke W.F."/>
            <person name="Gajer P."/>
            <person name="Crabtree J."/>
            <person name="Sebaihia M."/>
            <person name="Thomson N.R."/>
            <person name="Chaudhuri R."/>
            <person name="Henderson I.R."/>
            <person name="Sperandio V."/>
            <person name="Ravel J."/>
        </authorList>
    </citation>
    <scope>NUCLEOTIDE SEQUENCE [LARGE SCALE GENOMIC DNA]</scope>
    <source>
        <strain>E24377A / ETEC</strain>
    </source>
</reference>
<comment type="function">
    <text evidence="1">Catalyzes the reversible conversion of 3-phosphohydroxypyruvate to phosphoserine and of 3-hydroxy-2-oxo-4-phosphonooxybutanoate to phosphohydroxythreonine.</text>
</comment>
<comment type="catalytic activity">
    <reaction evidence="1">
        <text>O-phospho-L-serine + 2-oxoglutarate = 3-phosphooxypyruvate + L-glutamate</text>
        <dbReference type="Rhea" id="RHEA:14329"/>
        <dbReference type="ChEBI" id="CHEBI:16810"/>
        <dbReference type="ChEBI" id="CHEBI:18110"/>
        <dbReference type="ChEBI" id="CHEBI:29985"/>
        <dbReference type="ChEBI" id="CHEBI:57524"/>
        <dbReference type="EC" id="2.6.1.52"/>
    </reaction>
</comment>
<comment type="catalytic activity">
    <reaction evidence="1">
        <text>4-(phosphooxy)-L-threonine + 2-oxoglutarate = (R)-3-hydroxy-2-oxo-4-phosphooxybutanoate + L-glutamate</text>
        <dbReference type="Rhea" id="RHEA:16573"/>
        <dbReference type="ChEBI" id="CHEBI:16810"/>
        <dbReference type="ChEBI" id="CHEBI:29985"/>
        <dbReference type="ChEBI" id="CHEBI:58452"/>
        <dbReference type="ChEBI" id="CHEBI:58538"/>
        <dbReference type="EC" id="2.6.1.52"/>
    </reaction>
</comment>
<comment type="cofactor">
    <cofactor evidence="1">
        <name>pyridoxal 5'-phosphate</name>
        <dbReference type="ChEBI" id="CHEBI:597326"/>
    </cofactor>
    <text evidence="1">Binds 1 pyridoxal phosphate per subunit.</text>
</comment>
<comment type="pathway">
    <text evidence="1">Amino-acid biosynthesis; L-serine biosynthesis; L-serine from 3-phospho-D-glycerate: step 2/3.</text>
</comment>
<comment type="pathway">
    <text evidence="1">Cofactor biosynthesis; pyridoxine 5'-phosphate biosynthesis; pyridoxine 5'-phosphate from D-erythrose 4-phosphate: step 3/5.</text>
</comment>
<comment type="subunit">
    <text evidence="1">Homodimer.</text>
</comment>
<comment type="subcellular location">
    <subcellularLocation>
        <location evidence="1">Cytoplasm</location>
    </subcellularLocation>
</comment>
<comment type="similarity">
    <text evidence="1">Belongs to the class-V pyridoxal-phosphate-dependent aminotransferase family. SerC subfamily.</text>
</comment>